<comment type="function">
    <text evidence="1">Component of the 90S pre-ribosome involved in the maturation of rRNAs. Required for early cleavages of the pre-RNAs in the 40S ribosomal subunit maturation pathway (By similarity).</text>
</comment>
<comment type="subunit">
    <text evidence="1">Associates with 90S and pre-40S pre-ribosomal particles.</text>
</comment>
<comment type="subcellular location">
    <subcellularLocation>
        <location evidence="1">Nucleus</location>
        <location evidence="1">Nucleolus</location>
    </subcellularLocation>
</comment>
<comment type="similarity">
    <text evidence="4">Belongs to the RRP36 family.</text>
</comment>
<protein>
    <recommendedName>
        <fullName>rRNA biogenesis protein RRP36</fullName>
    </recommendedName>
    <alternativeName>
        <fullName>Ribosomal RNA-processing protein 36</fullName>
    </alternativeName>
</protein>
<proteinExistence type="inferred from homology"/>
<accession>D1Z670</accession>
<accession>F7VX49</accession>
<gene>
    <name type="primary">RRP36</name>
    <name type="ORF">SMAC_02669</name>
</gene>
<keyword id="KW-0175">Coiled coil</keyword>
<keyword id="KW-0539">Nucleus</keyword>
<keyword id="KW-1185">Reference proteome</keyword>
<keyword id="KW-0687">Ribonucleoprotein</keyword>
<keyword id="KW-0690">Ribosome biogenesis</keyword>
<keyword id="KW-0698">rRNA processing</keyword>
<feature type="chain" id="PRO_0000397662" description="rRNA biogenesis protein RRP36">
    <location>
        <begin position="1"/>
        <end position="333"/>
    </location>
</feature>
<feature type="region of interest" description="Disordered" evidence="3">
    <location>
        <begin position="1"/>
        <end position="85"/>
    </location>
</feature>
<feature type="region of interest" description="Disordered" evidence="3">
    <location>
        <begin position="99"/>
        <end position="194"/>
    </location>
</feature>
<feature type="region of interest" description="Disordered" evidence="3">
    <location>
        <begin position="242"/>
        <end position="262"/>
    </location>
</feature>
<feature type="region of interest" description="Disordered" evidence="3">
    <location>
        <begin position="313"/>
        <end position="333"/>
    </location>
</feature>
<feature type="coiled-coil region" evidence="2">
    <location>
        <begin position="215"/>
        <end position="275"/>
    </location>
</feature>
<feature type="compositionally biased region" description="Acidic residues" evidence="3">
    <location>
        <begin position="27"/>
        <end position="46"/>
    </location>
</feature>
<feature type="compositionally biased region" description="Acidic residues" evidence="3">
    <location>
        <begin position="54"/>
        <end position="73"/>
    </location>
</feature>
<feature type="compositionally biased region" description="Acidic residues" evidence="3">
    <location>
        <begin position="114"/>
        <end position="123"/>
    </location>
</feature>
<feature type="compositionally biased region" description="Basic and acidic residues" evidence="3">
    <location>
        <begin position="124"/>
        <end position="138"/>
    </location>
</feature>
<feature type="compositionally biased region" description="Basic and acidic residues" evidence="3">
    <location>
        <begin position="316"/>
        <end position="333"/>
    </location>
</feature>
<dbReference type="EMBL" id="CABT02000011">
    <property type="protein sequence ID" value="CCC10090.1"/>
    <property type="molecule type" value="Genomic_DNA"/>
</dbReference>
<dbReference type="RefSeq" id="XP_003352234.1">
    <property type="nucleotide sequence ID" value="XM_003352186.1"/>
</dbReference>
<dbReference type="SMR" id="D1Z670"/>
<dbReference type="FunCoup" id="D1Z670">
    <property type="interactions" value="515"/>
</dbReference>
<dbReference type="STRING" id="771870.D1Z670"/>
<dbReference type="GeneID" id="10809863"/>
<dbReference type="KEGG" id="smp:10809863"/>
<dbReference type="VEuPathDB" id="FungiDB:SMAC_02669"/>
<dbReference type="eggNOG" id="KOG3190">
    <property type="taxonomic scope" value="Eukaryota"/>
</dbReference>
<dbReference type="HOGENOM" id="CLU_048802_0_0_1"/>
<dbReference type="InParanoid" id="D1Z670"/>
<dbReference type="OMA" id="ERKEMPW"/>
<dbReference type="OrthoDB" id="448446at2759"/>
<dbReference type="Proteomes" id="UP000001881">
    <property type="component" value="Unassembled WGS sequence"/>
</dbReference>
<dbReference type="GO" id="GO:0030686">
    <property type="term" value="C:90S preribosome"/>
    <property type="evidence" value="ECO:0007669"/>
    <property type="project" value="TreeGrafter"/>
</dbReference>
<dbReference type="GO" id="GO:0005730">
    <property type="term" value="C:nucleolus"/>
    <property type="evidence" value="ECO:0007669"/>
    <property type="project" value="UniProtKB-SubCell"/>
</dbReference>
<dbReference type="GO" id="GO:0000462">
    <property type="term" value="P:maturation of SSU-rRNA from tricistronic rRNA transcript (SSU-rRNA, 5.8S rRNA, LSU-rRNA)"/>
    <property type="evidence" value="ECO:0007669"/>
    <property type="project" value="TreeGrafter"/>
</dbReference>
<dbReference type="InterPro" id="IPR009292">
    <property type="entry name" value="RRP36"/>
</dbReference>
<dbReference type="PANTHER" id="PTHR21738">
    <property type="entry name" value="RIBOSOMAL RNA PROCESSING PROTEIN 36 HOMOLOG"/>
    <property type="match status" value="1"/>
</dbReference>
<dbReference type="PANTHER" id="PTHR21738:SF0">
    <property type="entry name" value="RIBOSOMAL RNA PROCESSING PROTEIN 36 HOMOLOG"/>
    <property type="match status" value="1"/>
</dbReference>
<dbReference type="Pfam" id="PF06102">
    <property type="entry name" value="RRP36"/>
    <property type="match status" value="1"/>
</dbReference>
<evidence type="ECO:0000250" key="1"/>
<evidence type="ECO:0000255" key="2"/>
<evidence type="ECO:0000256" key="3">
    <source>
        <dbReference type="SAM" id="MobiDB-lite"/>
    </source>
</evidence>
<evidence type="ECO:0000305" key="4"/>
<sequence length="333" mass="37304">MPAVKRKAPPTLGAKLNRRVRPRFEAEPDSDVEEGSSDEAPSEEEGGGFHTGSDTEEEEDEEVEEGSDDESDAPSEHGGAGIDAAQLSFGALAKAQASLGTLKKKKKGSKGGDDESDDDEEKEEPNWKTEIEKGLKSKVEKHHRTSKHAPVEMTSKKPVSRRREFLVTNDAPAKPKARDPRFAPPGLGGSISGGSKAVVDEIKARKAYSFLDDYQEDEMKQLRMAIKKTKDAHEKEELQRALLSMESKKKARVRKDKERELLSEHKKKEKELIKQGKTPFYLKKSEQKKQLLVEQFASMKKSQVDKAIERKRKKIAGKEKKALPFARRTAEDR</sequence>
<reference key="1">
    <citation type="journal article" date="2010" name="PLoS Genet.">
        <title>De novo assembly of a 40 Mb eukaryotic genome from short sequence reads: Sordaria macrospora, a model organism for fungal morphogenesis.</title>
        <authorList>
            <person name="Nowrousian M."/>
            <person name="Stajich J.E."/>
            <person name="Chu M."/>
            <person name="Engh I."/>
            <person name="Espagne E."/>
            <person name="Halliday K."/>
            <person name="Kamerewerd J."/>
            <person name="Kempken F."/>
            <person name="Knab B."/>
            <person name="Kuo H.-C."/>
            <person name="Osiewacz H.D."/>
            <person name="Poeggeler S."/>
            <person name="Read N.D."/>
            <person name="Seiler S."/>
            <person name="Smith K.M."/>
            <person name="Zickler D."/>
            <person name="Kueck U."/>
            <person name="Freitag M."/>
        </authorList>
    </citation>
    <scope>NUCLEOTIDE SEQUENCE [LARGE SCALE GENOMIC DNA]</scope>
    <source>
        <strain>ATCC MYA-333 / DSM 997 / K(L3346) / K-hell</strain>
    </source>
</reference>
<organism>
    <name type="scientific">Sordaria macrospora (strain ATCC MYA-333 / DSM 997 / K(L3346) / K-hell)</name>
    <dbReference type="NCBI Taxonomy" id="771870"/>
    <lineage>
        <taxon>Eukaryota</taxon>
        <taxon>Fungi</taxon>
        <taxon>Dikarya</taxon>
        <taxon>Ascomycota</taxon>
        <taxon>Pezizomycotina</taxon>
        <taxon>Sordariomycetes</taxon>
        <taxon>Sordariomycetidae</taxon>
        <taxon>Sordariales</taxon>
        <taxon>Sordariaceae</taxon>
        <taxon>Sordaria</taxon>
    </lineage>
</organism>
<name>RRP36_SORMK</name>